<accession>Q8EH77</accession>
<keyword id="KW-0963">Cytoplasm</keyword>
<keyword id="KW-0275">Fatty acid biosynthesis</keyword>
<keyword id="KW-0276">Fatty acid metabolism</keyword>
<keyword id="KW-0444">Lipid biosynthesis</keyword>
<keyword id="KW-0443">Lipid metabolism</keyword>
<keyword id="KW-0460">Magnesium</keyword>
<keyword id="KW-0479">Metal-binding</keyword>
<keyword id="KW-1185">Reference proteome</keyword>
<keyword id="KW-0808">Transferase</keyword>
<reference key="1">
    <citation type="journal article" date="2002" name="Nat. Biotechnol.">
        <title>Genome sequence of the dissimilatory metal ion-reducing bacterium Shewanella oneidensis.</title>
        <authorList>
            <person name="Heidelberg J.F."/>
            <person name="Paulsen I.T."/>
            <person name="Nelson K.E."/>
            <person name="Gaidos E.J."/>
            <person name="Nelson W.C."/>
            <person name="Read T.D."/>
            <person name="Eisen J.A."/>
            <person name="Seshadri R."/>
            <person name="Ward N.L."/>
            <person name="Methe B.A."/>
            <person name="Clayton R.A."/>
            <person name="Meyer T."/>
            <person name="Tsapin A."/>
            <person name="Scott J."/>
            <person name="Beanan M.J."/>
            <person name="Brinkac L.M."/>
            <person name="Daugherty S.C."/>
            <person name="DeBoy R.T."/>
            <person name="Dodson R.J."/>
            <person name="Durkin A.S."/>
            <person name="Haft D.H."/>
            <person name="Kolonay J.F."/>
            <person name="Madupu R."/>
            <person name="Peterson J.D."/>
            <person name="Umayam L.A."/>
            <person name="White O."/>
            <person name="Wolf A.M."/>
            <person name="Vamathevan J.J."/>
            <person name="Weidman J.F."/>
            <person name="Impraim M."/>
            <person name="Lee K."/>
            <person name="Berry K.J."/>
            <person name="Lee C."/>
            <person name="Mueller J."/>
            <person name="Khouri H.M."/>
            <person name="Gill J."/>
            <person name="Utterback T.R."/>
            <person name="McDonald L.A."/>
            <person name="Feldblyum T.V."/>
            <person name="Smith H.O."/>
            <person name="Venter J.C."/>
            <person name="Nealson K.H."/>
            <person name="Fraser C.M."/>
        </authorList>
    </citation>
    <scope>NUCLEOTIDE SEQUENCE [LARGE SCALE GENOMIC DNA]</scope>
    <source>
        <strain>ATCC 700550 / JCM 31522 / CIP 106686 / LMG 19005 / NCIMB 14063 / MR-1</strain>
    </source>
</reference>
<name>ACPS_SHEON</name>
<comment type="function">
    <text evidence="1">Transfers the 4'-phosphopantetheine moiety from coenzyme A to a Ser of acyl-carrier-protein.</text>
</comment>
<comment type="catalytic activity">
    <reaction evidence="1">
        <text>apo-[ACP] + CoA = holo-[ACP] + adenosine 3',5'-bisphosphate + H(+)</text>
        <dbReference type="Rhea" id="RHEA:12068"/>
        <dbReference type="Rhea" id="RHEA-COMP:9685"/>
        <dbReference type="Rhea" id="RHEA-COMP:9690"/>
        <dbReference type="ChEBI" id="CHEBI:15378"/>
        <dbReference type="ChEBI" id="CHEBI:29999"/>
        <dbReference type="ChEBI" id="CHEBI:57287"/>
        <dbReference type="ChEBI" id="CHEBI:58343"/>
        <dbReference type="ChEBI" id="CHEBI:64479"/>
        <dbReference type="EC" id="2.7.8.7"/>
    </reaction>
</comment>
<comment type="cofactor">
    <cofactor evidence="1">
        <name>Mg(2+)</name>
        <dbReference type="ChEBI" id="CHEBI:18420"/>
    </cofactor>
</comment>
<comment type="subcellular location">
    <subcellularLocation>
        <location evidence="1">Cytoplasm</location>
    </subcellularLocation>
</comment>
<comment type="similarity">
    <text evidence="1">Belongs to the P-Pant transferase superfamily. AcpS family.</text>
</comment>
<feature type="chain" id="PRO_0000175697" description="Holo-[acyl-carrier-protein] synthase">
    <location>
        <begin position="1"/>
        <end position="127"/>
    </location>
</feature>
<feature type="binding site" evidence="1">
    <location>
        <position position="9"/>
    </location>
    <ligand>
        <name>Mg(2+)</name>
        <dbReference type="ChEBI" id="CHEBI:18420"/>
    </ligand>
</feature>
<feature type="binding site" evidence="1">
    <location>
        <position position="58"/>
    </location>
    <ligand>
        <name>Mg(2+)</name>
        <dbReference type="ChEBI" id="CHEBI:18420"/>
    </ligand>
</feature>
<dbReference type="EC" id="2.7.8.7" evidence="1"/>
<dbReference type="EMBL" id="AE014299">
    <property type="protein sequence ID" value="AAN54417.1"/>
    <property type="molecule type" value="Genomic_DNA"/>
</dbReference>
<dbReference type="RefSeq" id="NP_716972.1">
    <property type="nucleotide sequence ID" value="NC_004347.2"/>
</dbReference>
<dbReference type="RefSeq" id="WP_011071561.1">
    <property type="nucleotide sequence ID" value="NC_004347.2"/>
</dbReference>
<dbReference type="SMR" id="Q8EH77"/>
<dbReference type="STRING" id="211586.SO_1352"/>
<dbReference type="PaxDb" id="211586-SO_1352"/>
<dbReference type="KEGG" id="son:SO_1352"/>
<dbReference type="PATRIC" id="fig|211586.12.peg.1301"/>
<dbReference type="eggNOG" id="COG0736">
    <property type="taxonomic scope" value="Bacteria"/>
</dbReference>
<dbReference type="HOGENOM" id="CLU_089696_3_1_6"/>
<dbReference type="OrthoDB" id="517356at2"/>
<dbReference type="PhylomeDB" id="Q8EH77"/>
<dbReference type="BioCyc" id="SONE211586:G1GMP-1250-MONOMER"/>
<dbReference type="Proteomes" id="UP000008186">
    <property type="component" value="Chromosome"/>
</dbReference>
<dbReference type="GO" id="GO:0005737">
    <property type="term" value="C:cytoplasm"/>
    <property type="evidence" value="ECO:0007669"/>
    <property type="project" value="UniProtKB-SubCell"/>
</dbReference>
<dbReference type="GO" id="GO:0008897">
    <property type="term" value="F:holo-[acyl-carrier-protein] synthase activity"/>
    <property type="evidence" value="ECO:0007669"/>
    <property type="project" value="UniProtKB-UniRule"/>
</dbReference>
<dbReference type="GO" id="GO:0000287">
    <property type="term" value="F:magnesium ion binding"/>
    <property type="evidence" value="ECO:0007669"/>
    <property type="project" value="UniProtKB-UniRule"/>
</dbReference>
<dbReference type="GO" id="GO:0006633">
    <property type="term" value="P:fatty acid biosynthetic process"/>
    <property type="evidence" value="ECO:0007669"/>
    <property type="project" value="UniProtKB-UniRule"/>
</dbReference>
<dbReference type="FunFam" id="3.90.470.20:FF:000001">
    <property type="entry name" value="Holo-[acyl-carrier-protein] synthase"/>
    <property type="match status" value="1"/>
</dbReference>
<dbReference type="Gene3D" id="3.90.470.20">
    <property type="entry name" value="4'-phosphopantetheinyl transferase domain"/>
    <property type="match status" value="1"/>
</dbReference>
<dbReference type="HAMAP" id="MF_00101">
    <property type="entry name" value="AcpS"/>
    <property type="match status" value="1"/>
</dbReference>
<dbReference type="InterPro" id="IPR008278">
    <property type="entry name" value="4-PPantetheinyl_Trfase_dom"/>
</dbReference>
<dbReference type="InterPro" id="IPR037143">
    <property type="entry name" value="4-PPantetheinyl_Trfase_dom_sf"/>
</dbReference>
<dbReference type="InterPro" id="IPR002582">
    <property type="entry name" value="ACPS"/>
</dbReference>
<dbReference type="InterPro" id="IPR004568">
    <property type="entry name" value="Ppantetheine-prot_Trfase_dom"/>
</dbReference>
<dbReference type="NCBIfam" id="TIGR00516">
    <property type="entry name" value="acpS"/>
    <property type="match status" value="1"/>
</dbReference>
<dbReference type="NCBIfam" id="TIGR00556">
    <property type="entry name" value="pantethn_trn"/>
    <property type="match status" value="1"/>
</dbReference>
<dbReference type="Pfam" id="PF01648">
    <property type="entry name" value="ACPS"/>
    <property type="match status" value="1"/>
</dbReference>
<dbReference type="SUPFAM" id="SSF56214">
    <property type="entry name" value="4'-phosphopantetheinyl transferase"/>
    <property type="match status" value="1"/>
</dbReference>
<protein>
    <recommendedName>
        <fullName evidence="1">Holo-[acyl-carrier-protein] synthase</fullName>
        <shortName evidence="1">Holo-ACP synthase</shortName>
        <ecNumber evidence="1">2.7.8.7</ecNumber>
    </recommendedName>
    <alternativeName>
        <fullName evidence="1">4'-phosphopantetheinyl transferase AcpS</fullName>
    </alternativeName>
</protein>
<organism>
    <name type="scientific">Shewanella oneidensis (strain ATCC 700550 / JCM 31522 / CIP 106686 / LMG 19005 / NCIMB 14063 / MR-1)</name>
    <dbReference type="NCBI Taxonomy" id="211586"/>
    <lineage>
        <taxon>Bacteria</taxon>
        <taxon>Pseudomonadati</taxon>
        <taxon>Pseudomonadota</taxon>
        <taxon>Gammaproteobacteria</taxon>
        <taxon>Alteromonadales</taxon>
        <taxon>Shewanellaceae</taxon>
        <taxon>Shewanella</taxon>
    </lineage>
</organism>
<gene>
    <name evidence="1" type="primary">acpS</name>
    <name type="ordered locus">SO_1352</name>
</gene>
<evidence type="ECO:0000255" key="1">
    <source>
        <dbReference type="HAMAP-Rule" id="MF_00101"/>
    </source>
</evidence>
<proteinExistence type="inferred from homology"/>
<sequence>MAIVGLGTDIVEIERISAHVARSGDKLAKRVLTEAEFEIYQQHSQPSRYLAKRFAAKEAAAKALGTGIGRGVSFQHIHIGNTPDGAPTIDFTEGAQQRLTLLNGVVGHISIADEKSYAIATVILESR</sequence>